<protein>
    <recommendedName>
        <fullName evidence="1">UDP-N-acetylglucosamine 1-carboxyvinyltransferase 1</fullName>
        <ecNumber evidence="1">2.5.1.7</ecNumber>
    </recommendedName>
    <alternativeName>
        <fullName evidence="1">Enoylpyruvate transferase 1</fullName>
    </alternativeName>
    <alternativeName>
        <fullName evidence="1">UDP-N-acetylglucosamine enolpyruvyl transferase 1</fullName>
        <shortName evidence="1">EPT 1</shortName>
    </alternativeName>
</protein>
<comment type="function">
    <text evidence="1">Cell wall formation. Adds enolpyruvyl to UDP-N-acetylglucosamine.</text>
</comment>
<comment type="catalytic activity">
    <reaction evidence="1">
        <text>phosphoenolpyruvate + UDP-N-acetyl-alpha-D-glucosamine = UDP-N-acetyl-3-O-(1-carboxyvinyl)-alpha-D-glucosamine + phosphate</text>
        <dbReference type="Rhea" id="RHEA:18681"/>
        <dbReference type="ChEBI" id="CHEBI:43474"/>
        <dbReference type="ChEBI" id="CHEBI:57705"/>
        <dbReference type="ChEBI" id="CHEBI:58702"/>
        <dbReference type="ChEBI" id="CHEBI:68483"/>
        <dbReference type="EC" id="2.5.1.7"/>
    </reaction>
</comment>
<comment type="pathway">
    <text evidence="1">Cell wall biogenesis; peptidoglycan biosynthesis.</text>
</comment>
<comment type="subcellular location">
    <subcellularLocation>
        <location evidence="1">Cytoplasm</location>
    </subcellularLocation>
</comment>
<comment type="similarity">
    <text evidence="1">Belongs to the EPSP synthase family. MurA subfamily.</text>
</comment>
<reference key="1">
    <citation type="journal article" date="2002" name="Proc. Natl. Acad. Sci. U.S.A.">
        <title>Complete genome sequence and comparative genomic analysis of an emerging human pathogen, serotype V Streptococcus agalactiae.</title>
        <authorList>
            <person name="Tettelin H."/>
            <person name="Masignani V."/>
            <person name="Cieslewicz M.J."/>
            <person name="Eisen J.A."/>
            <person name="Peterson S.N."/>
            <person name="Wessels M.R."/>
            <person name="Paulsen I.T."/>
            <person name="Nelson K.E."/>
            <person name="Margarit I."/>
            <person name="Read T.D."/>
            <person name="Madoff L.C."/>
            <person name="Wolf A.M."/>
            <person name="Beanan M.J."/>
            <person name="Brinkac L.M."/>
            <person name="Daugherty S.C."/>
            <person name="DeBoy R.T."/>
            <person name="Durkin A.S."/>
            <person name="Kolonay J.F."/>
            <person name="Madupu R."/>
            <person name="Lewis M.R."/>
            <person name="Radune D."/>
            <person name="Fedorova N.B."/>
            <person name="Scanlan D."/>
            <person name="Khouri H.M."/>
            <person name="Mulligan S."/>
            <person name="Carty H.A."/>
            <person name="Cline R.T."/>
            <person name="Van Aken S.E."/>
            <person name="Gill J."/>
            <person name="Scarselli M."/>
            <person name="Mora M."/>
            <person name="Iacobini E.T."/>
            <person name="Brettoni C."/>
            <person name="Galli G."/>
            <person name="Mariani M."/>
            <person name="Vegni F."/>
            <person name="Maione D."/>
            <person name="Rinaudo D."/>
            <person name="Rappuoli R."/>
            <person name="Telford J.L."/>
            <person name="Kasper D.L."/>
            <person name="Grandi G."/>
            <person name="Fraser C.M."/>
        </authorList>
    </citation>
    <scope>NUCLEOTIDE SEQUENCE [LARGE SCALE GENOMIC DNA]</scope>
    <source>
        <strain>ATCC BAA-611 / 2603 V/R</strain>
    </source>
</reference>
<proteinExistence type="inferred from homology"/>
<name>MURA1_STRA5</name>
<dbReference type="EC" id="2.5.1.7" evidence="1"/>
<dbReference type="EMBL" id="AE009948">
    <property type="protein sequence ID" value="AAM99730.1"/>
    <property type="molecule type" value="Genomic_DNA"/>
</dbReference>
<dbReference type="RefSeq" id="NP_687858.1">
    <property type="nucleotide sequence ID" value="NC_004116.1"/>
</dbReference>
<dbReference type="RefSeq" id="WP_001226242.1">
    <property type="nucleotide sequence ID" value="NC_004116.1"/>
</dbReference>
<dbReference type="SMR" id="Q8E091"/>
<dbReference type="STRING" id="208435.SAG0843"/>
<dbReference type="KEGG" id="sag:SAG0843"/>
<dbReference type="PATRIC" id="fig|208435.3.peg.849"/>
<dbReference type="HOGENOM" id="CLU_027387_0_0_9"/>
<dbReference type="OrthoDB" id="9803760at2"/>
<dbReference type="UniPathway" id="UPA00219"/>
<dbReference type="Proteomes" id="UP000000821">
    <property type="component" value="Chromosome"/>
</dbReference>
<dbReference type="GO" id="GO:0005737">
    <property type="term" value="C:cytoplasm"/>
    <property type="evidence" value="ECO:0007669"/>
    <property type="project" value="UniProtKB-SubCell"/>
</dbReference>
<dbReference type="GO" id="GO:0008760">
    <property type="term" value="F:UDP-N-acetylglucosamine 1-carboxyvinyltransferase activity"/>
    <property type="evidence" value="ECO:0007669"/>
    <property type="project" value="UniProtKB-UniRule"/>
</dbReference>
<dbReference type="GO" id="GO:0051301">
    <property type="term" value="P:cell division"/>
    <property type="evidence" value="ECO:0007669"/>
    <property type="project" value="UniProtKB-KW"/>
</dbReference>
<dbReference type="GO" id="GO:0071555">
    <property type="term" value="P:cell wall organization"/>
    <property type="evidence" value="ECO:0007669"/>
    <property type="project" value="UniProtKB-KW"/>
</dbReference>
<dbReference type="GO" id="GO:0009252">
    <property type="term" value="P:peptidoglycan biosynthetic process"/>
    <property type="evidence" value="ECO:0007669"/>
    <property type="project" value="UniProtKB-UniRule"/>
</dbReference>
<dbReference type="GO" id="GO:0008360">
    <property type="term" value="P:regulation of cell shape"/>
    <property type="evidence" value="ECO:0007669"/>
    <property type="project" value="UniProtKB-KW"/>
</dbReference>
<dbReference type="GO" id="GO:0019277">
    <property type="term" value="P:UDP-N-acetylgalactosamine biosynthetic process"/>
    <property type="evidence" value="ECO:0007669"/>
    <property type="project" value="InterPro"/>
</dbReference>
<dbReference type="CDD" id="cd01555">
    <property type="entry name" value="UdpNAET"/>
    <property type="match status" value="1"/>
</dbReference>
<dbReference type="FunFam" id="3.65.10.10:FF:000001">
    <property type="entry name" value="UDP-N-acetylglucosamine 1-carboxyvinyltransferase"/>
    <property type="match status" value="1"/>
</dbReference>
<dbReference type="Gene3D" id="3.65.10.10">
    <property type="entry name" value="Enolpyruvate transferase domain"/>
    <property type="match status" value="2"/>
</dbReference>
<dbReference type="HAMAP" id="MF_00111">
    <property type="entry name" value="MurA"/>
    <property type="match status" value="1"/>
</dbReference>
<dbReference type="InterPro" id="IPR001986">
    <property type="entry name" value="Enolpyruvate_Tfrase_dom"/>
</dbReference>
<dbReference type="InterPro" id="IPR036968">
    <property type="entry name" value="Enolpyruvate_Tfrase_sf"/>
</dbReference>
<dbReference type="InterPro" id="IPR050068">
    <property type="entry name" value="MurA_subfamily"/>
</dbReference>
<dbReference type="InterPro" id="IPR013792">
    <property type="entry name" value="RNA3'P_cycl/enolpyr_Trfase_a/b"/>
</dbReference>
<dbReference type="InterPro" id="IPR005750">
    <property type="entry name" value="UDP_GlcNAc_COvinyl_MurA"/>
</dbReference>
<dbReference type="NCBIfam" id="TIGR01072">
    <property type="entry name" value="murA"/>
    <property type="match status" value="1"/>
</dbReference>
<dbReference type="NCBIfam" id="NF006873">
    <property type="entry name" value="PRK09369.1"/>
    <property type="match status" value="1"/>
</dbReference>
<dbReference type="NCBIfam" id="NF009470">
    <property type="entry name" value="PRK12830.1"/>
    <property type="match status" value="1"/>
</dbReference>
<dbReference type="PANTHER" id="PTHR43783">
    <property type="entry name" value="UDP-N-ACETYLGLUCOSAMINE 1-CARBOXYVINYLTRANSFERASE"/>
    <property type="match status" value="1"/>
</dbReference>
<dbReference type="PANTHER" id="PTHR43783:SF2">
    <property type="entry name" value="UDP-N-ACETYLGLUCOSAMINE 1-CARBOXYVINYLTRANSFERASE 2"/>
    <property type="match status" value="1"/>
</dbReference>
<dbReference type="Pfam" id="PF00275">
    <property type="entry name" value="EPSP_synthase"/>
    <property type="match status" value="1"/>
</dbReference>
<dbReference type="SUPFAM" id="SSF55205">
    <property type="entry name" value="EPT/RTPC-like"/>
    <property type="match status" value="1"/>
</dbReference>
<organism>
    <name type="scientific">Streptococcus agalactiae serotype V (strain ATCC BAA-611 / 2603 V/R)</name>
    <dbReference type="NCBI Taxonomy" id="208435"/>
    <lineage>
        <taxon>Bacteria</taxon>
        <taxon>Bacillati</taxon>
        <taxon>Bacillota</taxon>
        <taxon>Bacilli</taxon>
        <taxon>Lactobacillales</taxon>
        <taxon>Streptococcaceae</taxon>
        <taxon>Streptococcus</taxon>
    </lineage>
</organism>
<evidence type="ECO:0000255" key="1">
    <source>
        <dbReference type="HAMAP-Rule" id="MF_00111"/>
    </source>
</evidence>
<gene>
    <name evidence="1" type="primary">murA1</name>
    <name type="synonym">murA-1</name>
    <name type="ordered locus">SAG0843</name>
</gene>
<keyword id="KW-0131">Cell cycle</keyword>
<keyword id="KW-0132">Cell division</keyword>
<keyword id="KW-0133">Cell shape</keyword>
<keyword id="KW-0961">Cell wall biogenesis/degradation</keyword>
<keyword id="KW-0963">Cytoplasm</keyword>
<keyword id="KW-0573">Peptidoglycan synthesis</keyword>
<keyword id="KW-0670">Pyruvate</keyword>
<keyword id="KW-1185">Reference proteome</keyword>
<keyword id="KW-0808">Transferase</keyword>
<sequence length="419" mass="44534">MRKIIINGGKQLTGEVAVSGAKNSVVALIPATILADDVVVLDGVPAISDVDSLVDIMETMGAKIKRYGETLEIDPCGVKDIPMPYGKINSLRASYYFYGSLLGRYGQATLGLPGGCDLGPRPIDLHLKAFEAMGASVSYEGDSMRLATNGKPLQGANIYMDTVSVGATINTIIAAAKANGRTVIENAAREPEIIDVATLLNNMGAHIRGAGTDVITIEGVKSLHGTRHQVIPDRIEAGTYIAMAAAIGRGIKVTNVLYEHLESFIAKLDEMGVRMTVEEDSIFVEEQERLKAVSIKTSPYPGFATDLQQPLTPLLLTAEGNGSLLDTIYEKRVNHVPELARMGANISTLGGKIVYSGPNQLSGAPVKATDLRAGAALVIAGLMAEGRTEITNIEFILRGYSNIIEKLTSLGADIQLVEE</sequence>
<feature type="chain" id="PRO_0000231275" description="UDP-N-acetylglucosamine 1-carboxyvinyltransferase 1">
    <location>
        <begin position="1"/>
        <end position="419"/>
    </location>
</feature>
<feature type="active site" description="Proton donor" evidence="1">
    <location>
        <position position="116"/>
    </location>
</feature>
<feature type="binding site" evidence="1">
    <location>
        <begin position="22"/>
        <end position="23"/>
    </location>
    <ligand>
        <name>phosphoenolpyruvate</name>
        <dbReference type="ChEBI" id="CHEBI:58702"/>
    </ligand>
</feature>
<feature type="binding site" evidence="1">
    <location>
        <position position="92"/>
    </location>
    <ligand>
        <name>UDP-N-acetyl-alpha-D-glucosamine</name>
        <dbReference type="ChEBI" id="CHEBI:57705"/>
    </ligand>
</feature>
<feature type="binding site" evidence="1">
    <location>
        <begin position="121"/>
        <end position="125"/>
    </location>
    <ligand>
        <name>UDP-N-acetyl-alpha-D-glucosamine</name>
        <dbReference type="ChEBI" id="CHEBI:57705"/>
    </ligand>
</feature>
<feature type="binding site" evidence="1">
    <location>
        <position position="306"/>
    </location>
    <ligand>
        <name>UDP-N-acetyl-alpha-D-glucosamine</name>
        <dbReference type="ChEBI" id="CHEBI:57705"/>
    </ligand>
</feature>
<feature type="binding site" evidence="1">
    <location>
        <position position="328"/>
    </location>
    <ligand>
        <name>UDP-N-acetyl-alpha-D-glucosamine</name>
        <dbReference type="ChEBI" id="CHEBI:57705"/>
    </ligand>
</feature>
<feature type="modified residue" description="2-(S-cysteinyl)pyruvic acid O-phosphothioketal" evidence="1">
    <location>
        <position position="116"/>
    </location>
</feature>
<accession>Q8E091</accession>